<feature type="chain" id="PRO_0000263101" description="Tetratricopeptide repeat protein 32">
    <location>
        <begin position="1"/>
        <end position="148"/>
    </location>
</feature>
<feature type="repeat" description="TPR 1">
    <location>
        <begin position="12"/>
        <end position="45"/>
    </location>
</feature>
<feature type="repeat" description="TPR 2">
    <location>
        <begin position="55"/>
        <end position="88"/>
    </location>
</feature>
<feature type="repeat" description="TPR 3">
    <location>
        <begin position="89"/>
        <end position="122"/>
    </location>
</feature>
<dbReference type="EMBL" id="AK005950">
    <property type="protein sequence ID" value="BAB24334.1"/>
    <property type="molecule type" value="mRNA"/>
</dbReference>
<dbReference type="EMBL" id="AK078146">
    <property type="protein sequence ID" value="BAC37147.1"/>
    <property type="molecule type" value="mRNA"/>
</dbReference>
<dbReference type="EMBL" id="BC119273">
    <property type="protein sequence ID" value="AAI19274.1"/>
    <property type="molecule type" value="mRNA"/>
</dbReference>
<dbReference type="CCDS" id="CCDS25808.1"/>
<dbReference type="RefSeq" id="NP_083597.1">
    <property type="nucleotide sequence ID" value="NM_029321.2"/>
</dbReference>
<dbReference type="SMR" id="Q9DAC7"/>
<dbReference type="FunCoup" id="Q9DAC7">
    <property type="interactions" value="43"/>
</dbReference>
<dbReference type="STRING" id="10090.ENSMUSP00000082891"/>
<dbReference type="PhosphoSitePlus" id="Q9DAC7"/>
<dbReference type="PaxDb" id="10090-ENSMUSP00000082891"/>
<dbReference type="ProteomicsDB" id="298328"/>
<dbReference type="Antibodypedia" id="27107">
    <property type="antibodies" value="249 antibodies from 19 providers"/>
</dbReference>
<dbReference type="DNASU" id="75516"/>
<dbReference type="Ensembl" id="ENSMUST00000085741.2">
    <property type="protein sequence ID" value="ENSMUSP00000082891.2"/>
    <property type="gene ID" value="ENSMUSG00000066637.3"/>
</dbReference>
<dbReference type="GeneID" id="75516"/>
<dbReference type="KEGG" id="mmu:75516"/>
<dbReference type="UCSC" id="uc007nal.1">
    <property type="organism name" value="mouse"/>
</dbReference>
<dbReference type="AGR" id="MGI:1922766"/>
<dbReference type="CTD" id="130502"/>
<dbReference type="MGI" id="MGI:1922766">
    <property type="gene designation" value="Ttc32"/>
</dbReference>
<dbReference type="VEuPathDB" id="HostDB:ENSMUSG00000066637"/>
<dbReference type="eggNOG" id="KOG1124">
    <property type="taxonomic scope" value="Eukaryota"/>
</dbReference>
<dbReference type="GeneTree" id="ENSGT00390000011905"/>
<dbReference type="HOGENOM" id="CLU_151642_0_0_1"/>
<dbReference type="InParanoid" id="Q9DAC7"/>
<dbReference type="OMA" id="MEEDNSQ"/>
<dbReference type="OrthoDB" id="2017782at2759"/>
<dbReference type="PhylomeDB" id="Q9DAC7"/>
<dbReference type="BioGRID-ORCS" id="75516">
    <property type="hits" value="4 hits in 78 CRISPR screens"/>
</dbReference>
<dbReference type="PRO" id="PR:Q9DAC7"/>
<dbReference type="Proteomes" id="UP000000589">
    <property type="component" value="Chromosome 12"/>
</dbReference>
<dbReference type="RNAct" id="Q9DAC7">
    <property type="molecule type" value="protein"/>
</dbReference>
<dbReference type="Bgee" id="ENSMUSG00000066637">
    <property type="expression patterns" value="Expressed in intercostal muscle and 209 other cell types or tissues"/>
</dbReference>
<dbReference type="ExpressionAtlas" id="Q9DAC7">
    <property type="expression patterns" value="baseline and differential"/>
</dbReference>
<dbReference type="Gene3D" id="1.25.40.10">
    <property type="entry name" value="Tetratricopeptide repeat domain"/>
    <property type="match status" value="1"/>
</dbReference>
<dbReference type="InterPro" id="IPR011990">
    <property type="entry name" value="TPR-like_helical_dom_sf"/>
</dbReference>
<dbReference type="InterPro" id="IPR013105">
    <property type="entry name" value="TPR_2"/>
</dbReference>
<dbReference type="InterPro" id="IPR019734">
    <property type="entry name" value="TPR_rpt"/>
</dbReference>
<dbReference type="PANTHER" id="PTHR47059">
    <property type="entry name" value="TETRATRICOPEPTIDE REPEAT PROTEIN 32"/>
    <property type="match status" value="1"/>
</dbReference>
<dbReference type="PANTHER" id="PTHR47059:SF1">
    <property type="entry name" value="TETRATRICOPEPTIDE REPEAT PROTEIN 32"/>
    <property type="match status" value="1"/>
</dbReference>
<dbReference type="Pfam" id="PF07719">
    <property type="entry name" value="TPR_2"/>
    <property type="match status" value="1"/>
</dbReference>
<dbReference type="SMART" id="SM00028">
    <property type="entry name" value="TPR"/>
    <property type="match status" value="2"/>
</dbReference>
<dbReference type="SUPFAM" id="SSF48452">
    <property type="entry name" value="TPR-like"/>
    <property type="match status" value="1"/>
</dbReference>
<dbReference type="PROSITE" id="PS50005">
    <property type="entry name" value="TPR"/>
    <property type="match status" value="2"/>
</dbReference>
<dbReference type="PROSITE" id="PS50293">
    <property type="entry name" value="TPR_REGION"/>
    <property type="match status" value="1"/>
</dbReference>
<sequence>MALRPGREGGESSAALATAQARFSRGEFAEARELYSAFIGQCARHGSKCSPEDLATAYNNRGQTKYFSVDFYEAMDDYTSAIEILPSFEVPYYNRGLIRYRLGYFDEALEDFKKALDLNPGFQDAVLSLKQTILDKEEKQRRNAEKSY</sequence>
<keyword id="KW-1185">Reference proteome</keyword>
<keyword id="KW-0677">Repeat</keyword>
<keyword id="KW-0802">TPR repeat</keyword>
<organism>
    <name type="scientific">Mus musculus</name>
    <name type="common">Mouse</name>
    <dbReference type="NCBI Taxonomy" id="10090"/>
    <lineage>
        <taxon>Eukaryota</taxon>
        <taxon>Metazoa</taxon>
        <taxon>Chordata</taxon>
        <taxon>Craniata</taxon>
        <taxon>Vertebrata</taxon>
        <taxon>Euteleostomi</taxon>
        <taxon>Mammalia</taxon>
        <taxon>Eutheria</taxon>
        <taxon>Euarchontoglires</taxon>
        <taxon>Glires</taxon>
        <taxon>Rodentia</taxon>
        <taxon>Myomorpha</taxon>
        <taxon>Muroidea</taxon>
        <taxon>Muridae</taxon>
        <taxon>Murinae</taxon>
        <taxon>Mus</taxon>
        <taxon>Mus</taxon>
    </lineage>
</organism>
<accession>Q9DAC7</accession>
<gene>
    <name type="primary">Ttc32</name>
</gene>
<proteinExistence type="evidence at protein level"/>
<reference key="1">
    <citation type="journal article" date="2005" name="Science">
        <title>The transcriptional landscape of the mammalian genome.</title>
        <authorList>
            <person name="Carninci P."/>
            <person name="Kasukawa T."/>
            <person name="Katayama S."/>
            <person name="Gough J."/>
            <person name="Frith M.C."/>
            <person name="Maeda N."/>
            <person name="Oyama R."/>
            <person name="Ravasi T."/>
            <person name="Lenhard B."/>
            <person name="Wells C."/>
            <person name="Kodzius R."/>
            <person name="Shimokawa K."/>
            <person name="Bajic V.B."/>
            <person name="Brenner S.E."/>
            <person name="Batalov S."/>
            <person name="Forrest A.R."/>
            <person name="Zavolan M."/>
            <person name="Davis M.J."/>
            <person name="Wilming L.G."/>
            <person name="Aidinis V."/>
            <person name="Allen J.E."/>
            <person name="Ambesi-Impiombato A."/>
            <person name="Apweiler R."/>
            <person name="Aturaliya R.N."/>
            <person name="Bailey T.L."/>
            <person name="Bansal M."/>
            <person name="Baxter L."/>
            <person name="Beisel K.W."/>
            <person name="Bersano T."/>
            <person name="Bono H."/>
            <person name="Chalk A.M."/>
            <person name="Chiu K.P."/>
            <person name="Choudhary V."/>
            <person name="Christoffels A."/>
            <person name="Clutterbuck D.R."/>
            <person name="Crowe M.L."/>
            <person name="Dalla E."/>
            <person name="Dalrymple B.P."/>
            <person name="de Bono B."/>
            <person name="Della Gatta G."/>
            <person name="di Bernardo D."/>
            <person name="Down T."/>
            <person name="Engstrom P."/>
            <person name="Fagiolini M."/>
            <person name="Faulkner G."/>
            <person name="Fletcher C.F."/>
            <person name="Fukushima T."/>
            <person name="Furuno M."/>
            <person name="Futaki S."/>
            <person name="Gariboldi M."/>
            <person name="Georgii-Hemming P."/>
            <person name="Gingeras T.R."/>
            <person name="Gojobori T."/>
            <person name="Green R.E."/>
            <person name="Gustincich S."/>
            <person name="Harbers M."/>
            <person name="Hayashi Y."/>
            <person name="Hensch T.K."/>
            <person name="Hirokawa N."/>
            <person name="Hill D."/>
            <person name="Huminiecki L."/>
            <person name="Iacono M."/>
            <person name="Ikeo K."/>
            <person name="Iwama A."/>
            <person name="Ishikawa T."/>
            <person name="Jakt M."/>
            <person name="Kanapin A."/>
            <person name="Katoh M."/>
            <person name="Kawasawa Y."/>
            <person name="Kelso J."/>
            <person name="Kitamura H."/>
            <person name="Kitano H."/>
            <person name="Kollias G."/>
            <person name="Krishnan S.P."/>
            <person name="Kruger A."/>
            <person name="Kummerfeld S.K."/>
            <person name="Kurochkin I.V."/>
            <person name="Lareau L.F."/>
            <person name="Lazarevic D."/>
            <person name="Lipovich L."/>
            <person name="Liu J."/>
            <person name="Liuni S."/>
            <person name="McWilliam S."/>
            <person name="Madan Babu M."/>
            <person name="Madera M."/>
            <person name="Marchionni L."/>
            <person name="Matsuda H."/>
            <person name="Matsuzawa S."/>
            <person name="Miki H."/>
            <person name="Mignone F."/>
            <person name="Miyake S."/>
            <person name="Morris K."/>
            <person name="Mottagui-Tabar S."/>
            <person name="Mulder N."/>
            <person name="Nakano N."/>
            <person name="Nakauchi H."/>
            <person name="Ng P."/>
            <person name="Nilsson R."/>
            <person name="Nishiguchi S."/>
            <person name="Nishikawa S."/>
            <person name="Nori F."/>
            <person name="Ohara O."/>
            <person name="Okazaki Y."/>
            <person name="Orlando V."/>
            <person name="Pang K.C."/>
            <person name="Pavan W.J."/>
            <person name="Pavesi G."/>
            <person name="Pesole G."/>
            <person name="Petrovsky N."/>
            <person name="Piazza S."/>
            <person name="Reed J."/>
            <person name="Reid J.F."/>
            <person name="Ring B.Z."/>
            <person name="Ringwald M."/>
            <person name="Rost B."/>
            <person name="Ruan Y."/>
            <person name="Salzberg S.L."/>
            <person name="Sandelin A."/>
            <person name="Schneider C."/>
            <person name="Schoenbach C."/>
            <person name="Sekiguchi K."/>
            <person name="Semple C.A."/>
            <person name="Seno S."/>
            <person name="Sessa L."/>
            <person name="Sheng Y."/>
            <person name="Shibata Y."/>
            <person name="Shimada H."/>
            <person name="Shimada K."/>
            <person name="Silva D."/>
            <person name="Sinclair B."/>
            <person name="Sperling S."/>
            <person name="Stupka E."/>
            <person name="Sugiura K."/>
            <person name="Sultana R."/>
            <person name="Takenaka Y."/>
            <person name="Taki K."/>
            <person name="Tammoja K."/>
            <person name="Tan S.L."/>
            <person name="Tang S."/>
            <person name="Taylor M.S."/>
            <person name="Tegner J."/>
            <person name="Teichmann S.A."/>
            <person name="Ueda H.R."/>
            <person name="van Nimwegen E."/>
            <person name="Verardo R."/>
            <person name="Wei C.L."/>
            <person name="Yagi K."/>
            <person name="Yamanishi H."/>
            <person name="Zabarovsky E."/>
            <person name="Zhu S."/>
            <person name="Zimmer A."/>
            <person name="Hide W."/>
            <person name="Bult C."/>
            <person name="Grimmond S.M."/>
            <person name="Teasdale R.D."/>
            <person name="Liu E.T."/>
            <person name="Brusic V."/>
            <person name="Quackenbush J."/>
            <person name="Wahlestedt C."/>
            <person name="Mattick J.S."/>
            <person name="Hume D.A."/>
            <person name="Kai C."/>
            <person name="Sasaki D."/>
            <person name="Tomaru Y."/>
            <person name="Fukuda S."/>
            <person name="Kanamori-Katayama M."/>
            <person name="Suzuki M."/>
            <person name="Aoki J."/>
            <person name="Arakawa T."/>
            <person name="Iida J."/>
            <person name="Imamura K."/>
            <person name="Itoh M."/>
            <person name="Kato T."/>
            <person name="Kawaji H."/>
            <person name="Kawagashira N."/>
            <person name="Kawashima T."/>
            <person name="Kojima M."/>
            <person name="Kondo S."/>
            <person name="Konno H."/>
            <person name="Nakano K."/>
            <person name="Ninomiya N."/>
            <person name="Nishio T."/>
            <person name="Okada M."/>
            <person name="Plessy C."/>
            <person name="Shibata K."/>
            <person name="Shiraki T."/>
            <person name="Suzuki S."/>
            <person name="Tagami M."/>
            <person name="Waki K."/>
            <person name="Watahiki A."/>
            <person name="Okamura-Oho Y."/>
            <person name="Suzuki H."/>
            <person name="Kawai J."/>
            <person name="Hayashizaki Y."/>
        </authorList>
    </citation>
    <scope>NUCLEOTIDE SEQUENCE [LARGE SCALE MRNA]</scope>
    <source>
        <strain>C57BL/6J</strain>
        <tissue>Medulla oblongata</tissue>
        <tissue>Testis</tissue>
    </source>
</reference>
<reference key="2">
    <citation type="journal article" date="2004" name="Genome Res.">
        <title>The status, quality, and expansion of the NIH full-length cDNA project: the Mammalian Gene Collection (MGC).</title>
        <authorList>
            <consortium name="The MGC Project Team"/>
        </authorList>
    </citation>
    <scope>NUCLEOTIDE SEQUENCE [LARGE SCALE MRNA]</scope>
    <source>
        <tissue>Brain</tissue>
    </source>
</reference>
<reference key="3">
    <citation type="journal article" date="2010" name="Cell">
        <title>A tissue-specific atlas of mouse protein phosphorylation and expression.</title>
        <authorList>
            <person name="Huttlin E.L."/>
            <person name="Jedrychowski M.P."/>
            <person name="Elias J.E."/>
            <person name="Goswami T."/>
            <person name="Rad R."/>
            <person name="Beausoleil S.A."/>
            <person name="Villen J."/>
            <person name="Haas W."/>
            <person name="Sowa M.E."/>
            <person name="Gygi S.P."/>
        </authorList>
    </citation>
    <scope>IDENTIFICATION BY MASS SPECTROMETRY [LARGE SCALE ANALYSIS]</scope>
    <source>
        <tissue>Liver</tissue>
    </source>
</reference>
<name>TTC32_MOUSE</name>
<protein>
    <recommendedName>
        <fullName>Tetratricopeptide repeat protein 32</fullName>
        <shortName>TPR repeat protein 32</shortName>
    </recommendedName>
</protein>